<protein>
    <recommendedName>
        <fullName evidence="1">Putative transport protein YbjL</fullName>
    </recommendedName>
</protein>
<dbReference type="EMBL" id="CP001127">
    <property type="protein sequence ID" value="ACF90057.1"/>
    <property type="molecule type" value="Genomic_DNA"/>
</dbReference>
<dbReference type="RefSeq" id="WP_001024853.1">
    <property type="nucleotide sequence ID" value="NC_011094.1"/>
</dbReference>
<dbReference type="SMR" id="B4TRM3"/>
<dbReference type="KEGG" id="sew:SeSA_A1023"/>
<dbReference type="HOGENOM" id="CLU_035023_2_2_6"/>
<dbReference type="Proteomes" id="UP000001865">
    <property type="component" value="Chromosome"/>
</dbReference>
<dbReference type="GO" id="GO:0005886">
    <property type="term" value="C:plasma membrane"/>
    <property type="evidence" value="ECO:0007669"/>
    <property type="project" value="UniProtKB-SubCell"/>
</dbReference>
<dbReference type="GO" id="GO:0008324">
    <property type="term" value="F:monoatomic cation transmembrane transporter activity"/>
    <property type="evidence" value="ECO:0007669"/>
    <property type="project" value="InterPro"/>
</dbReference>
<dbReference type="GO" id="GO:0006813">
    <property type="term" value="P:potassium ion transport"/>
    <property type="evidence" value="ECO:0007669"/>
    <property type="project" value="InterPro"/>
</dbReference>
<dbReference type="FunFam" id="3.30.70.1450:FF:000003">
    <property type="entry name" value="Putative transport protein YbjL"/>
    <property type="match status" value="1"/>
</dbReference>
<dbReference type="Gene3D" id="3.30.70.1450">
    <property type="entry name" value="Regulator of K+ conductance, C-terminal domain"/>
    <property type="match status" value="1"/>
</dbReference>
<dbReference type="HAMAP" id="MF_01015">
    <property type="entry name" value="YbjL"/>
    <property type="match status" value="1"/>
</dbReference>
<dbReference type="InterPro" id="IPR050144">
    <property type="entry name" value="AAE_transporter"/>
</dbReference>
<dbReference type="InterPro" id="IPR006037">
    <property type="entry name" value="RCK_C"/>
</dbReference>
<dbReference type="InterPro" id="IPR036721">
    <property type="entry name" value="RCK_C_sf"/>
</dbReference>
<dbReference type="InterPro" id="IPR023017">
    <property type="entry name" value="Transp_YbjL_put"/>
</dbReference>
<dbReference type="InterPro" id="IPR006512">
    <property type="entry name" value="YidE_YbjL"/>
</dbReference>
<dbReference type="NCBIfam" id="NF003440">
    <property type="entry name" value="PRK04972.1"/>
    <property type="match status" value="1"/>
</dbReference>
<dbReference type="NCBIfam" id="TIGR01625">
    <property type="entry name" value="YidE_YbjL_dupl"/>
    <property type="match status" value="2"/>
</dbReference>
<dbReference type="PANTHER" id="PTHR30445">
    <property type="entry name" value="K(+)_H(+) ANTIPORTER SUBUNIT KHTT"/>
    <property type="match status" value="1"/>
</dbReference>
<dbReference type="PANTHER" id="PTHR30445:SF10">
    <property type="entry name" value="TRANSPORT PROTEIN YBJL-RELATED"/>
    <property type="match status" value="1"/>
</dbReference>
<dbReference type="Pfam" id="PF06826">
    <property type="entry name" value="Asp-Al_Ex"/>
    <property type="match status" value="2"/>
</dbReference>
<dbReference type="Pfam" id="PF02080">
    <property type="entry name" value="TrkA_C"/>
    <property type="match status" value="2"/>
</dbReference>
<dbReference type="SUPFAM" id="SSF116726">
    <property type="entry name" value="TrkA C-terminal domain-like"/>
    <property type="match status" value="2"/>
</dbReference>
<dbReference type="PROSITE" id="PS51202">
    <property type="entry name" value="RCK_C"/>
    <property type="match status" value="2"/>
</dbReference>
<comment type="subcellular location">
    <subcellularLocation>
        <location evidence="1">Cell membrane</location>
        <topology evidence="1">Multi-pass membrane protein</topology>
    </subcellularLocation>
</comment>
<comment type="similarity">
    <text evidence="1">Belongs to the AAE transporter (TC 2.A.81) family. YbjL subfamily.</text>
</comment>
<organism>
    <name type="scientific">Salmonella schwarzengrund (strain CVM19633)</name>
    <dbReference type="NCBI Taxonomy" id="439843"/>
    <lineage>
        <taxon>Bacteria</taxon>
        <taxon>Pseudomonadati</taxon>
        <taxon>Pseudomonadota</taxon>
        <taxon>Gammaproteobacteria</taxon>
        <taxon>Enterobacterales</taxon>
        <taxon>Enterobacteriaceae</taxon>
        <taxon>Salmonella</taxon>
    </lineage>
</organism>
<name>YBJL_SALSV</name>
<accession>B4TRM3</accession>
<evidence type="ECO:0000255" key="1">
    <source>
        <dbReference type="HAMAP-Rule" id="MF_01015"/>
    </source>
</evidence>
<proteinExistence type="inferred from homology"/>
<keyword id="KW-1003">Cell membrane</keyword>
<keyword id="KW-0472">Membrane</keyword>
<keyword id="KW-0677">Repeat</keyword>
<keyword id="KW-0812">Transmembrane</keyword>
<keyword id="KW-1133">Transmembrane helix</keyword>
<keyword id="KW-0813">Transport</keyword>
<gene>
    <name evidence="1" type="primary">ybjL</name>
    <name type="ordered locus">SeSA_A1023</name>
</gene>
<feature type="chain" id="PRO_1000135196" description="Putative transport protein YbjL">
    <location>
        <begin position="1"/>
        <end position="561"/>
    </location>
</feature>
<feature type="transmembrane region" description="Helical" evidence="1">
    <location>
        <begin position="8"/>
        <end position="28"/>
    </location>
</feature>
<feature type="transmembrane region" description="Helical" evidence="1">
    <location>
        <begin position="32"/>
        <end position="52"/>
    </location>
</feature>
<feature type="transmembrane region" description="Helical" evidence="1">
    <location>
        <begin position="66"/>
        <end position="86"/>
    </location>
</feature>
<feature type="transmembrane region" description="Helical" evidence="1">
    <location>
        <begin position="94"/>
        <end position="114"/>
    </location>
</feature>
<feature type="transmembrane region" description="Helical" evidence="1">
    <location>
        <begin position="158"/>
        <end position="178"/>
    </location>
</feature>
<feature type="transmembrane region" description="Helical" evidence="1">
    <location>
        <begin position="383"/>
        <end position="403"/>
    </location>
</feature>
<feature type="transmembrane region" description="Helical" evidence="1">
    <location>
        <begin position="406"/>
        <end position="426"/>
    </location>
</feature>
<feature type="transmembrane region" description="Helical" evidence="1">
    <location>
        <begin position="447"/>
        <end position="467"/>
    </location>
</feature>
<feature type="transmembrane region" description="Helical" evidence="1">
    <location>
        <begin position="475"/>
        <end position="495"/>
    </location>
</feature>
<feature type="transmembrane region" description="Helical" evidence="1">
    <location>
        <begin position="540"/>
        <end position="560"/>
    </location>
</feature>
<feature type="domain" description="RCK C-terminal 1" evidence="1">
    <location>
        <begin position="200"/>
        <end position="288"/>
    </location>
</feature>
<feature type="domain" description="RCK C-terminal 2" evidence="1">
    <location>
        <begin position="292"/>
        <end position="373"/>
    </location>
</feature>
<reference key="1">
    <citation type="journal article" date="2011" name="J. Bacteriol.">
        <title>Comparative genomics of 28 Salmonella enterica isolates: evidence for CRISPR-mediated adaptive sublineage evolution.</title>
        <authorList>
            <person name="Fricke W.F."/>
            <person name="Mammel M.K."/>
            <person name="McDermott P.F."/>
            <person name="Tartera C."/>
            <person name="White D.G."/>
            <person name="Leclerc J.E."/>
            <person name="Ravel J."/>
            <person name="Cebula T.A."/>
        </authorList>
    </citation>
    <scope>NUCLEOTIDE SEQUENCE [LARGE SCALE GENOMIC DNA]</scope>
    <source>
        <strain>CVM19633</strain>
    </source>
</reference>
<sequence>MNINVADLLNGNYILLLFVVLALGLCLGKLRLGSVQLGNSIGVLVVSLLLGQQHFSINTDALNLGFMLFIFCVGVEAGPNFFSIFFRDGKNYLMLALVMVGSALLIALGLGKLFGWDIGLTAGMLAGSMTSTPVLVGAGDTLRHSGIASTQLSSALDNLSLGYALTYLIGLVSLIVGARYLPKLQHQDLQTSAQQIARERGLDTDANRKVYLPVIRAYRVGPELVAWTDGKNLRELGIYRQTGCYIERIRRNGILANPDGDAVLQMGDEIALVGYPDAHARLDPSFRNGKEVFDRDLLDMRIVTEEIVVKNHNAVGRRLAQLKLTDHGCFLNRVIRSQIEMPIDDNVVLNKGDVLQVSGDARRVKTIADRIGFISIHSQVTDLLAFCAFFIIGLMIGMITFQFSNFSFGIGNAAGLLFAGIMLGFLRANHPTFGYIPQGALNMVKEFGLMVFMAGVGLSAGSGISNGLGAVGGQMLIAGLVVSLVPVVICFLFGAYVLRMNRALLFGAMMGARTCAPAMEIISDTARSNIPALGYAGTYAIANVLLTLAGTLIVIIWPGLG</sequence>